<accession>A1WKA5</accession>
<feature type="chain" id="PRO_1000052333" description="Large ribosomal subunit protein uL24">
    <location>
        <begin position="1"/>
        <end position="106"/>
    </location>
</feature>
<sequence length="106" mass="11427">MNKIRKGDEVIVLAGRDKGKRGTVSQRKDDSYLLIEGINLVKKHAKPNPLKGTTGGIIQKTMPIHQSNVAVFNAATGKADRVGIKVQSDGTRVRVFKSSGTEIKGT</sequence>
<comment type="function">
    <text evidence="1">One of two assembly initiator proteins, it binds directly to the 5'-end of the 23S rRNA, where it nucleates assembly of the 50S subunit.</text>
</comment>
<comment type="function">
    <text evidence="1">One of the proteins that surrounds the polypeptide exit tunnel on the outside of the subunit.</text>
</comment>
<comment type="subunit">
    <text evidence="1">Part of the 50S ribosomal subunit.</text>
</comment>
<comment type="similarity">
    <text evidence="1">Belongs to the universal ribosomal protein uL24 family.</text>
</comment>
<organism>
    <name type="scientific">Verminephrobacter eiseniae (strain EF01-2)</name>
    <dbReference type="NCBI Taxonomy" id="391735"/>
    <lineage>
        <taxon>Bacteria</taxon>
        <taxon>Pseudomonadati</taxon>
        <taxon>Pseudomonadota</taxon>
        <taxon>Betaproteobacteria</taxon>
        <taxon>Burkholderiales</taxon>
        <taxon>Comamonadaceae</taxon>
        <taxon>Verminephrobacter</taxon>
    </lineage>
</organism>
<dbReference type="EMBL" id="CP000542">
    <property type="protein sequence ID" value="ABM58062.1"/>
    <property type="molecule type" value="Genomic_DNA"/>
</dbReference>
<dbReference type="RefSeq" id="WP_011810065.1">
    <property type="nucleotide sequence ID" value="NC_008786.1"/>
</dbReference>
<dbReference type="SMR" id="A1WKA5"/>
<dbReference type="STRING" id="391735.Veis_2314"/>
<dbReference type="GeneID" id="76460879"/>
<dbReference type="KEGG" id="vei:Veis_2314"/>
<dbReference type="eggNOG" id="COG0198">
    <property type="taxonomic scope" value="Bacteria"/>
</dbReference>
<dbReference type="HOGENOM" id="CLU_093315_2_2_4"/>
<dbReference type="OrthoDB" id="9807419at2"/>
<dbReference type="Proteomes" id="UP000000374">
    <property type="component" value="Chromosome"/>
</dbReference>
<dbReference type="GO" id="GO:1990904">
    <property type="term" value="C:ribonucleoprotein complex"/>
    <property type="evidence" value="ECO:0007669"/>
    <property type="project" value="UniProtKB-KW"/>
</dbReference>
<dbReference type="GO" id="GO:0005840">
    <property type="term" value="C:ribosome"/>
    <property type="evidence" value="ECO:0007669"/>
    <property type="project" value="UniProtKB-KW"/>
</dbReference>
<dbReference type="GO" id="GO:0019843">
    <property type="term" value="F:rRNA binding"/>
    <property type="evidence" value="ECO:0007669"/>
    <property type="project" value="UniProtKB-UniRule"/>
</dbReference>
<dbReference type="GO" id="GO:0003735">
    <property type="term" value="F:structural constituent of ribosome"/>
    <property type="evidence" value="ECO:0007669"/>
    <property type="project" value="InterPro"/>
</dbReference>
<dbReference type="GO" id="GO:0006412">
    <property type="term" value="P:translation"/>
    <property type="evidence" value="ECO:0007669"/>
    <property type="project" value="UniProtKB-UniRule"/>
</dbReference>
<dbReference type="CDD" id="cd06089">
    <property type="entry name" value="KOW_RPL26"/>
    <property type="match status" value="1"/>
</dbReference>
<dbReference type="FunFam" id="2.30.30.30:FF:000004">
    <property type="entry name" value="50S ribosomal protein L24"/>
    <property type="match status" value="1"/>
</dbReference>
<dbReference type="Gene3D" id="2.30.30.30">
    <property type="match status" value="1"/>
</dbReference>
<dbReference type="HAMAP" id="MF_01326_B">
    <property type="entry name" value="Ribosomal_uL24_B"/>
    <property type="match status" value="1"/>
</dbReference>
<dbReference type="InterPro" id="IPR005824">
    <property type="entry name" value="KOW"/>
</dbReference>
<dbReference type="InterPro" id="IPR014722">
    <property type="entry name" value="Rib_uL2_dom2"/>
</dbReference>
<dbReference type="InterPro" id="IPR003256">
    <property type="entry name" value="Ribosomal_uL24"/>
</dbReference>
<dbReference type="InterPro" id="IPR005825">
    <property type="entry name" value="Ribosomal_uL24_CS"/>
</dbReference>
<dbReference type="InterPro" id="IPR041988">
    <property type="entry name" value="Ribosomal_uL24_KOW"/>
</dbReference>
<dbReference type="InterPro" id="IPR008991">
    <property type="entry name" value="Translation_prot_SH3-like_sf"/>
</dbReference>
<dbReference type="NCBIfam" id="TIGR01079">
    <property type="entry name" value="rplX_bact"/>
    <property type="match status" value="1"/>
</dbReference>
<dbReference type="PANTHER" id="PTHR12903">
    <property type="entry name" value="MITOCHONDRIAL RIBOSOMAL PROTEIN L24"/>
    <property type="match status" value="1"/>
</dbReference>
<dbReference type="Pfam" id="PF00467">
    <property type="entry name" value="KOW"/>
    <property type="match status" value="1"/>
</dbReference>
<dbReference type="Pfam" id="PF17136">
    <property type="entry name" value="ribosomal_L24"/>
    <property type="match status" value="1"/>
</dbReference>
<dbReference type="SMART" id="SM00739">
    <property type="entry name" value="KOW"/>
    <property type="match status" value="1"/>
</dbReference>
<dbReference type="SUPFAM" id="SSF50104">
    <property type="entry name" value="Translation proteins SH3-like domain"/>
    <property type="match status" value="1"/>
</dbReference>
<dbReference type="PROSITE" id="PS01108">
    <property type="entry name" value="RIBOSOMAL_L24"/>
    <property type="match status" value="1"/>
</dbReference>
<name>RL24_VEREI</name>
<keyword id="KW-1185">Reference proteome</keyword>
<keyword id="KW-0687">Ribonucleoprotein</keyword>
<keyword id="KW-0689">Ribosomal protein</keyword>
<keyword id="KW-0694">RNA-binding</keyword>
<keyword id="KW-0699">rRNA-binding</keyword>
<evidence type="ECO:0000255" key="1">
    <source>
        <dbReference type="HAMAP-Rule" id="MF_01326"/>
    </source>
</evidence>
<evidence type="ECO:0000305" key="2"/>
<protein>
    <recommendedName>
        <fullName evidence="1">Large ribosomal subunit protein uL24</fullName>
    </recommendedName>
    <alternativeName>
        <fullName evidence="2">50S ribosomal protein L24</fullName>
    </alternativeName>
</protein>
<reference key="1">
    <citation type="submission" date="2006-12" db="EMBL/GenBank/DDBJ databases">
        <title>Complete sequence of chromosome 1 of Verminephrobacter eiseniae EF01-2.</title>
        <authorList>
            <person name="Copeland A."/>
            <person name="Lucas S."/>
            <person name="Lapidus A."/>
            <person name="Barry K."/>
            <person name="Detter J.C."/>
            <person name="Glavina del Rio T."/>
            <person name="Dalin E."/>
            <person name="Tice H."/>
            <person name="Pitluck S."/>
            <person name="Chertkov O."/>
            <person name="Brettin T."/>
            <person name="Bruce D."/>
            <person name="Han C."/>
            <person name="Tapia R."/>
            <person name="Gilna P."/>
            <person name="Schmutz J."/>
            <person name="Larimer F."/>
            <person name="Land M."/>
            <person name="Hauser L."/>
            <person name="Kyrpides N."/>
            <person name="Kim E."/>
            <person name="Stahl D."/>
            <person name="Richardson P."/>
        </authorList>
    </citation>
    <scope>NUCLEOTIDE SEQUENCE [LARGE SCALE GENOMIC DNA]</scope>
    <source>
        <strain>EF01-2</strain>
    </source>
</reference>
<gene>
    <name evidence="1" type="primary">rplX</name>
    <name type="ordered locus">Veis_2314</name>
</gene>
<proteinExistence type="inferred from homology"/>